<gene>
    <name type="ordered locus">SSO2081</name>
</gene>
<comment type="function">
    <text evidence="2 4">CRISPR (clustered regularly interspaced short palindromic repeat) is an adaptive immune system that provides protection against mobile genetic elements (viruses, transposable elements and conjugative plasmids). CRISPR clusters contain spacers, sequences complementary to antecedent mobile elements, and target invading nucleic acids. CRISPR clusters are transcribed and processed into CRISPR RNA (crRNA) (Probable). A nuclease that degrades cyclic oligoadenylates (cOA), second messengers that induce an antiviral state important for defense against invading nucleic acids. Destruction of cOA deactivates the Csx1 ribonuclease, preventing uncontrolled degradation of cellular RNA. Degrades cA4 (a tetraadenylate ring) into a linear diadenylate product with 5'-OH and 2',3'-cyclic phosphate termini. Is 10-fold more active than SSO1393, suggesting this is the major cA4 degradation enzyme. Is highly specific for cA4; it has very poor activity on cA6 and no discernible activity against a number of cyclic dinucleotides. There may be 2 active sites per homodimer (PubMed:30232454).</text>
</comment>
<comment type="catalytic activity">
    <reaction evidence="2">
        <text>cyclic tetraadenylate = 2 5'-hydroxy-diadenylate 2',3'-cylic phosphate</text>
        <dbReference type="Rhea" id="RHEA:58012"/>
        <dbReference type="ChEBI" id="CHEBI:142457"/>
        <dbReference type="ChEBI" id="CHEBI:142458"/>
    </reaction>
</comment>
<comment type="cofactor">
    <text evidence="2">Does not require a metal cofactor.</text>
</comment>
<comment type="biophysicochemical properties">
    <kinetics>
        <text evidence="2">kcat is 0.23 min(-1).</text>
    </kinetics>
</comment>
<comment type="subunit">
    <text evidence="1 5">Homodimer.</text>
</comment>
<comment type="subcellular location">
    <subcellularLocation>
        <location evidence="5">Cytoplasm</location>
    </subcellularLocation>
</comment>
<comment type="similarity">
    <text evidence="4">Belongs to the cOA ring nuclease family.</text>
</comment>
<sequence>MVKLVATLGTSPGGVIESFLYLVKKGENIDEVRVVTTSNAEVKKAWRIVRLMFVCCIQEKFPKVEISEHPLDIEDIYSEDDLRKVREFVEKQLGEGDYLDITGGRKSMSVAAALAAKNKGVKIITSIIPQDDYNKISKKVRELKEIPEIKNRGECRQEMKETYCSLIVQDARSIEFEI</sequence>
<keyword id="KW-0002">3D-structure</keyword>
<keyword id="KW-0051">Antiviral defense</keyword>
<keyword id="KW-0963">Cytoplasm</keyword>
<keyword id="KW-0456">Lyase</keyword>
<keyword id="KW-1185">Reference proteome</keyword>
<protein>
    <recommendedName>
        <fullName evidence="3">CRISPR system ring nuclease SSO2081</fullName>
        <ecNumber evidence="4">4.6.1.-</ecNumber>
    </recommendedName>
</protein>
<name>RN081_SACS2</name>
<evidence type="ECO:0000250" key="1">
    <source>
        <dbReference type="UniProtKB" id="Q97YD2"/>
    </source>
</evidence>
<evidence type="ECO:0000269" key="2">
    <source>
    </source>
</evidence>
<evidence type="ECO:0000303" key="3">
    <source>
    </source>
</evidence>
<evidence type="ECO:0000305" key="4"/>
<evidence type="ECO:0000305" key="5">
    <source>
    </source>
</evidence>
<evidence type="ECO:0007829" key="6">
    <source>
        <dbReference type="PDB" id="7YGH"/>
    </source>
</evidence>
<evidence type="ECO:0007829" key="7">
    <source>
        <dbReference type="PDB" id="7YHL"/>
    </source>
</evidence>
<evidence type="ECO:0007829" key="8">
    <source>
        <dbReference type="PDB" id="8HTW"/>
    </source>
</evidence>
<dbReference type="EC" id="4.6.1.-" evidence="4"/>
<dbReference type="EMBL" id="AE006641">
    <property type="protein sequence ID" value="AAK42262.1"/>
    <property type="molecule type" value="Genomic_DNA"/>
</dbReference>
<dbReference type="PIR" id="S73092">
    <property type="entry name" value="S73092"/>
</dbReference>
<dbReference type="PDB" id="7YGH">
    <property type="method" value="X-ray"/>
    <property type="resolution" value="3.11 A"/>
    <property type="chains" value="A/B=1-178"/>
</dbReference>
<dbReference type="PDB" id="7YGL">
    <property type="method" value="X-ray"/>
    <property type="resolution" value="2.50 A"/>
    <property type="chains" value="A/B=1-178"/>
</dbReference>
<dbReference type="PDB" id="7YHL">
    <property type="method" value="X-ray"/>
    <property type="resolution" value="2.70 A"/>
    <property type="chains" value="A/B=1-178"/>
</dbReference>
<dbReference type="PDB" id="8HTW">
    <property type="method" value="X-ray"/>
    <property type="resolution" value="2.00 A"/>
    <property type="chains" value="A/B=1-178"/>
</dbReference>
<dbReference type="PDBsum" id="7YGH"/>
<dbReference type="PDBsum" id="7YGL"/>
<dbReference type="PDBsum" id="7YHL"/>
<dbReference type="PDBsum" id="8HTW"/>
<dbReference type="SMR" id="Q7LYJ6"/>
<dbReference type="STRING" id="273057.SSO2081"/>
<dbReference type="PaxDb" id="273057-SSO2081"/>
<dbReference type="DNASU" id="1453589"/>
<dbReference type="EnsemblBacteria" id="AAK42262">
    <property type="protein sequence ID" value="AAK42262"/>
    <property type="gene ID" value="SSO2081"/>
</dbReference>
<dbReference type="KEGG" id="sso:SSO2081"/>
<dbReference type="PATRIC" id="fig|273057.12.peg.2159"/>
<dbReference type="eggNOG" id="arCOG03847">
    <property type="taxonomic scope" value="Archaea"/>
</dbReference>
<dbReference type="HOGENOM" id="CLU_1514679_0_0_2"/>
<dbReference type="InParanoid" id="Q7LYJ6"/>
<dbReference type="PhylomeDB" id="Q7LYJ6"/>
<dbReference type="Proteomes" id="UP000001974">
    <property type="component" value="Chromosome"/>
</dbReference>
<dbReference type="GO" id="GO:0005737">
    <property type="term" value="C:cytoplasm"/>
    <property type="evidence" value="ECO:0007669"/>
    <property type="project" value="UniProtKB-SubCell"/>
</dbReference>
<dbReference type="GO" id="GO:0016829">
    <property type="term" value="F:lyase activity"/>
    <property type="evidence" value="ECO:0007669"/>
    <property type="project" value="UniProtKB-KW"/>
</dbReference>
<dbReference type="GO" id="GO:0051607">
    <property type="term" value="P:defense response to virus"/>
    <property type="evidence" value="ECO:0007669"/>
    <property type="project" value="UniProtKB-KW"/>
</dbReference>
<dbReference type="Gene3D" id="3.40.50.10770">
    <property type="entry name" value="Hypothetical protein VC1899 like domain (Restriction endonuclease-like)"/>
    <property type="match status" value="1"/>
</dbReference>
<dbReference type="InterPro" id="IPR011335">
    <property type="entry name" value="Restrct_endonuc-II-like"/>
</dbReference>
<dbReference type="InterPro" id="IPR019092">
    <property type="entry name" value="SSO2081-like_dom"/>
</dbReference>
<dbReference type="NCBIfam" id="NF040581">
    <property type="entry name" value="cas_Crn1"/>
    <property type="match status" value="1"/>
</dbReference>
<dbReference type="Pfam" id="PF09623">
    <property type="entry name" value="Cas_NE0113"/>
    <property type="match status" value="1"/>
</dbReference>
<dbReference type="SUPFAM" id="SSF52980">
    <property type="entry name" value="Restriction endonuclease-like"/>
    <property type="match status" value="1"/>
</dbReference>
<accession>Q7LYJ6</accession>
<feature type="chain" id="PRO_0000446011" description="CRISPR system ring nuclease SSO2081">
    <location>
        <begin position="1"/>
        <end position="178"/>
    </location>
</feature>
<feature type="region of interest" description="Transition state stabilizer" evidence="5">
    <location>
        <begin position="105"/>
        <end position="106"/>
    </location>
</feature>
<feature type="mutagenesis site" description="3.5-fold decrease in kcat for degradation of cA4." evidence="2">
    <original>S</original>
    <variation>A</variation>
    <location>
        <position position="11"/>
    </location>
</feature>
<feature type="mutagenesis site" description="No degradation of cA4." evidence="2">
    <original>RK</original>
    <variation>AA</variation>
    <location>
        <begin position="105"/>
        <end position="106"/>
    </location>
</feature>
<feature type="strand" evidence="8">
    <location>
        <begin position="2"/>
        <end position="7"/>
    </location>
</feature>
<feature type="strand" evidence="7">
    <location>
        <begin position="9"/>
        <end position="11"/>
    </location>
</feature>
<feature type="helix" evidence="8">
    <location>
        <begin position="15"/>
        <end position="24"/>
    </location>
</feature>
<feature type="strand" evidence="8">
    <location>
        <begin position="29"/>
        <end position="39"/>
    </location>
</feature>
<feature type="helix" evidence="8">
    <location>
        <begin position="40"/>
        <end position="56"/>
    </location>
</feature>
<feature type="turn" evidence="8">
    <location>
        <begin position="57"/>
        <end position="60"/>
    </location>
</feature>
<feature type="strand" evidence="8">
    <location>
        <begin position="65"/>
        <end position="72"/>
    </location>
</feature>
<feature type="helix" evidence="8">
    <location>
        <begin position="79"/>
        <end position="92"/>
    </location>
</feature>
<feature type="strand" evidence="8">
    <location>
        <begin position="98"/>
        <end position="100"/>
    </location>
</feature>
<feature type="strand" evidence="8">
    <location>
        <begin position="102"/>
        <end position="104"/>
    </location>
</feature>
<feature type="helix" evidence="8">
    <location>
        <begin position="106"/>
        <end position="117"/>
    </location>
</feature>
<feature type="turn" evidence="8">
    <location>
        <begin position="118"/>
        <end position="120"/>
    </location>
</feature>
<feature type="strand" evidence="8">
    <location>
        <begin position="122"/>
        <end position="127"/>
    </location>
</feature>
<feature type="helix" evidence="8">
    <location>
        <begin position="130"/>
        <end position="142"/>
    </location>
</feature>
<feature type="helix" evidence="8">
    <location>
        <begin position="152"/>
        <end position="154"/>
    </location>
</feature>
<feature type="helix" evidence="8">
    <location>
        <begin position="157"/>
        <end position="164"/>
    </location>
</feature>
<feature type="strand" evidence="6">
    <location>
        <begin position="165"/>
        <end position="167"/>
    </location>
</feature>
<feature type="strand" evidence="8">
    <location>
        <begin position="172"/>
        <end position="175"/>
    </location>
</feature>
<proteinExistence type="evidence at protein level"/>
<reference key="1">
    <citation type="journal article" date="2001" name="Proc. Natl. Acad. Sci. U.S.A.">
        <title>The complete genome of the crenarchaeon Sulfolobus solfataricus P2.</title>
        <authorList>
            <person name="She Q."/>
            <person name="Singh R.K."/>
            <person name="Confalonieri F."/>
            <person name="Zivanovic Y."/>
            <person name="Allard G."/>
            <person name="Awayez M.J."/>
            <person name="Chan-Weiher C.C.-Y."/>
            <person name="Clausen I.G."/>
            <person name="Curtis B.A."/>
            <person name="De Moors A."/>
            <person name="Erauso G."/>
            <person name="Fletcher C."/>
            <person name="Gordon P.M.K."/>
            <person name="Heikamp-de Jong I."/>
            <person name="Jeffries A.C."/>
            <person name="Kozera C.J."/>
            <person name="Medina N."/>
            <person name="Peng X."/>
            <person name="Thi-Ngoc H.P."/>
            <person name="Redder P."/>
            <person name="Schenk M.E."/>
            <person name="Theriault C."/>
            <person name="Tolstrup N."/>
            <person name="Charlebois R.L."/>
            <person name="Doolittle W.F."/>
            <person name="Duguet M."/>
            <person name="Gaasterland T."/>
            <person name="Garrett R.A."/>
            <person name="Ragan M.A."/>
            <person name="Sensen C.W."/>
            <person name="Van der Oost J."/>
        </authorList>
    </citation>
    <scope>NUCLEOTIDE SEQUENCE [LARGE SCALE GENOMIC DNA]</scope>
    <source>
        <strain>ATCC 35092 / DSM 1617 / JCM 11322 / P2</strain>
    </source>
</reference>
<reference key="2">
    <citation type="journal article" date="2018" name="Nature">
        <title>Ring nucleases deactivate type III CRISPR ribonucleases by degrading cyclic oligoadenylate.</title>
        <authorList>
            <person name="Athukoralage J.S."/>
            <person name="Rouillon C."/>
            <person name="Graham S."/>
            <person name="Grueschow S."/>
            <person name="White M.F."/>
        </authorList>
    </citation>
    <scope>FUNCTION</scope>
    <scope>CATALYTIC ACTIVITY</scope>
    <scope>SUBSTRATE SPECIFICITY</scope>
    <scope>IDENTIFICATION BY MASS SPECTROMETRY</scope>
    <scope>COFACTOR</scope>
    <scope>BIOPHYSICOCHEMICAL PROPERTIES</scope>
    <scope>SUBCELLULAR LOCATION</scope>
    <scope>MUTAGENESIS OF SER-11 AND 105-ARG-LYS-106</scope>
    <source>
        <strain>ATCC 35092 / DSM 1617 / JCM 11322 / P2</strain>
    </source>
</reference>
<organism>
    <name type="scientific">Saccharolobus solfataricus (strain ATCC 35092 / DSM 1617 / JCM 11322 / P2)</name>
    <name type="common">Sulfolobus solfataricus</name>
    <dbReference type="NCBI Taxonomy" id="273057"/>
    <lineage>
        <taxon>Archaea</taxon>
        <taxon>Thermoproteota</taxon>
        <taxon>Thermoprotei</taxon>
        <taxon>Sulfolobales</taxon>
        <taxon>Sulfolobaceae</taxon>
        <taxon>Saccharolobus</taxon>
    </lineage>
</organism>